<organism>
    <name type="scientific">Caulobacter vibrioides (strain NA1000 / CB15N)</name>
    <name type="common">Caulobacter crescentus</name>
    <dbReference type="NCBI Taxonomy" id="565050"/>
    <lineage>
        <taxon>Bacteria</taxon>
        <taxon>Pseudomonadati</taxon>
        <taxon>Pseudomonadota</taxon>
        <taxon>Alphaproteobacteria</taxon>
        <taxon>Caulobacterales</taxon>
        <taxon>Caulobacteraceae</taxon>
        <taxon>Caulobacter</taxon>
    </lineage>
</organism>
<evidence type="ECO:0000255" key="1">
    <source>
        <dbReference type="HAMAP-Rule" id="MF_00038"/>
    </source>
</evidence>
<gene>
    <name evidence="1" type="primary">mraY</name>
    <name type="ordered locus">CCNA_02640</name>
</gene>
<reference key="1">
    <citation type="journal article" date="2010" name="J. Bacteriol.">
        <title>The genetic basis of laboratory adaptation in Caulobacter crescentus.</title>
        <authorList>
            <person name="Marks M.E."/>
            <person name="Castro-Rojas C.M."/>
            <person name="Teiling C."/>
            <person name="Du L."/>
            <person name="Kapatral V."/>
            <person name="Walunas T.L."/>
            <person name="Crosson S."/>
        </authorList>
    </citation>
    <scope>NUCLEOTIDE SEQUENCE [LARGE SCALE GENOMIC DNA]</scope>
    <source>
        <strain>NA1000 / CB15N</strain>
    </source>
</reference>
<feature type="chain" id="PRO_1000117171" description="Phospho-N-acetylmuramoyl-pentapeptide-transferase">
    <location>
        <begin position="1"/>
        <end position="370"/>
    </location>
</feature>
<feature type="transmembrane region" description="Helical" evidence="1">
    <location>
        <begin position="24"/>
        <end position="44"/>
    </location>
</feature>
<feature type="transmembrane region" description="Helical" evidence="1">
    <location>
        <begin position="78"/>
        <end position="98"/>
    </location>
</feature>
<feature type="transmembrane region" description="Helical" evidence="1">
    <location>
        <begin position="103"/>
        <end position="123"/>
    </location>
</feature>
<feature type="transmembrane region" description="Helical" evidence="1">
    <location>
        <begin position="138"/>
        <end position="158"/>
    </location>
</feature>
<feature type="transmembrane region" description="Helical" evidence="1">
    <location>
        <begin position="177"/>
        <end position="197"/>
    </location>
</feature>
<feature type="transmembrane region" description="Helical" evidence="1">
    <location>
        <begin position="209"/>
        <end position="229"/>
    </location>
</feature>
<feature type="transmembrane region" description="Helical" evidence="1">
    <location>
        <begin position="245"/>
        <end position="265"/>
    </location>
</feature>
<feature type="transmembrane region" description="Helical" evidence="1">
    <location>
        <begin position="273"/>
        <end position="293"/>
    </location>
</feature>
<feature type="transmembrane region" description="Helical" evidence="1">
    <location>
        <begin position="298"/>
        <end position="318"/>
    </location>
</feature>
<feature type="transmembrane region" description="Helical" evidence="1">
    <location>
        <begin position="347"/>
        <end position="367"/>
    </location>
</feature>
<keyword id="KW-0131">Cell cycle</keyword>
<keyword id="KW-0132">Cell division</keyword>
<keyword id="KW-0997">Cell inner membrane</keyword>
<keyword id="KW-1003">Cell membrane</keyword>
<keyword id="KW-0133">Cell shape</keyword>
<keyword id="KW-0961">Cell wall biogenesis/degradation</keyword>
<keyword id="KW-0460">Magnesium</keyword>
<keyword id="KW-0472">Membrane</keyword>
<keyword id="KW-0479">Metal-binding</keyword>
<keyword id="KW-0573">Peptidoglycan synthesis</keyword>
<keyword id="KW-1185">Reference proteome</keyword>
<keyword id="KW-0808">Transferase</keyword>
<keyword id="KW-0812">Transmembrane</keyword>
<keyword id="KW-1133">Transmembrane helix</keyword>
<dbReference type="EC" id="2.7.8.13" evidence="1"/>
<dbReference type="EMBL" id="CP001340">
    <property type="protein sequence ID" value="ACL96105.1"/>
    <property type="molecule type" value="Genomic_DNA"/>
</dbReference>
<dbReference type="RefSeq" id="WP_012640523.1">
    <property type="nucleotide sequence ID" value="NC_011916.1"/>
</dbReference>
<dbReference type="RefSeq" id="YP_002518013.1">
    <property type="nucleotide sequence ID" value="NC_011916.1"/>
</dbReference>
<dbReference type="SMR" id="B8H097"/>
<dbReference type="GeneID" id="7332742"/>
<dbReference type="KEGG" id="ccs:CCNA_02640"/>
<dbReference type="PATRIC" id="fig|565050.3.peg.2588"/>
<dbReference type="HOGENOM" id="CLU_023982_0_0_5"/>
<dbReference type="OrthoDB" id="9805475at2"/>
<dbReference type="PhylomeDB" id="B8H097"/>
<dbReference type="UniPathway" id="UPA00219"/>
<dbReference type="Proteomes" id="UP000001364">
    <property type="component" value="Chromosome"/>
</dbReference>
<dbReference type="GO" id="GO:0005886">
    <property type="term" value="C:plasma membrane"/>
    <property type="evidence" value="ECO:0007669"/>
    <property type="project" value="UniProtKB-SubCell"/>
</dbReference>
<dbReference type="GO" id="GO:0046872">
    <property type="term" value="F:metal ion binding"/>
    <property type="evidence" value="ECO:0007669"/>
    <property type="project" value="UniProtKB-KW"/>
</dbReference>
<dbReference type="GO" id="GO:0008963">
    <property type="term" value="F:phospho-N-acetylmuramoyl-pentapeptide-transferase activity"/>
    <property type="evidence" value="ECO:0007669"/>
    <property type="project" value="UniProtKB-UniRule"/>
</dbReference>
<dbReference type="GO" id="GO:0051992">
    <property type="term" value="F:UDP-N-acetylmuramoyl-L-alanyl-D-glutamyl-meso-2,6-diaminopimelyl-D-alanyl-D-alanine:undecaprenyl-phosphate transferase activity"/>
    <property type="evidence" value="ECO:0007669"/>
    <property type="project" value="RHEA"/>
</dbReference>
<dbReference type="GO" id="GO:0051301">
    <property type="term" value="P:cell division"/>
    <property type="evidence" value="ECO:0007669"/>
    <property type="project" value="UniProtKB-KW"/>
</dbReference>
<dbReference type="GO" id="GO:0071555">
    <property type="term" value="P:cell wall organization"/>
    <property type="evidence" value="ECO:0007669"/>
    <property type="project" value="UniProtKB-KW"/>
</dbReference>
<dbReference type="GO" id="GO:0009252">
    <property type="term" value="P:peptidoglycan biosynthetic process"/>
    <property type="evidence" value="ECO:0007669"/>
    <property type="project" value="UniProtKB-UniRule"/>
</dbReference>
<dbReference type="GO" id="GO:0008360">
    <property type="term" value="P:regulation of cell shape"/>
    <property type="evidence" value="ECO:0007669"/>
    <property type="project" value="UniProtKB-KW"/>
</dbReference>
<dbReference type="CDD" id="cd06852">
    <property type="entry name" value="GT_MraY"/>
    <property type="match status" value="1"/>
</dbReference>
<dbReference type="HAMAP" id="MF_00038">
    <property type="entry name" value="MraY"/>
    <property type="match status" value="1"/>
</dbReference>
<dbReference type="InterPro" id="IPR000715">
    <property type="entry name" value="Glycosyl_transferase_4"/>
</dbReference>
<dbReference type="InterPro" id="IPR003524">
    <property type="entry name" value="PNAcMuramoyl-5peptid_Trfase"/>
</dbReference>
<dbReference type="InterPro" id="IPR018480">
    <property type="entry name" value="PNAcMuramoyl-5peptid_Trfase_CS"/>
</dbReference>
<dbReference type="NCBIfam" id="TIGR00445">
    <property type="entry name" value="mraY"/>
    <property type="match status" value="1"/>
</dbReference>
<dbReference type="PANTHER" id="PTHR22926">
    <property type="entry name" value="PHOSPHO-N-ACETYLMURAMOYL-PENTAPEPTIDE-TRANSFERASE"/>
    <property type="match status" value="1"/>
</dbReference>
<dbReference type="PANTHER" id="PTHR22926:SF5">
    <property type="entry name" value="PHOSPHO-N-ACETYLMURAMOYL-PENTAPEPTIDE-TRANSFERASE HOMOLOG"/>
    <property type="match status" value="1"/>
</dbReference>
<dbReference type="Pfam" id="PF00953">
    <property type="entry name" value="Glycos_transf_4"/>
    <property type="match status" value="1"/>
</dbReference>
<dbReference type="PROSITE" id="PS01348">
    <property type="entry name" value="MRAY_2"/>
    <property type="match status" value="1"/>
</dbReference>
<name>MRAY_CAUVN</name>
<sequence length="370" mass="40023">MLYLLYEWLARSQEHLPALNLLKYLTFRSGMAMLTAYIVAVAMGSRFIRWMKAKQGKGQPIRTDGIARHVTEKAGTPTMGGFMILAGLFVAALLWADLRNVHVWVVLLITGSYGLLGFMDDYAKVTKQTTAGLSSVQKLVAQFIVAIIATVILILFAPKSPMTPGMETSLVFPIFKALVINLGWFYVAFAAFTIAGFSNAVNLTDGLDGLAIVPVMFAASTFGLIAYLVGNYKFADYLNLHFAPGVGELAVLCGAIIGGGMGFLWYNAPPAKIFMGDTGSLALGGALGAIAVCAKHELVLGIVGGLFVAEALSVMIQVAYFKKTGKRVFLMAPIHHHFEKLGWPESTVVIRFWIVSMILAFIGLATLKLR</sequence>
<proteinExistence type="inferred from homology"/>
<accession>B8H097</accession>
<comment type="function">
    <text evidence="1">Catalyzes the initial step of the lipid cycle reactions in the biosynthesis of the cell wall peptidoglycan: transfers peptidoglycan precursor phospho-MurNAc-pentapeptide from UDP-MurNAc-pentapeptide onto the lipid carrier undecaprenyl phosphate, yielding undecaprenyl-pyrophosphoryl-MurNAc-pentapeptide, known as lipid I.</text>
</comment>
<comment type="catalytic activity">
    <reaction evidence="1">
        <text>UDP-N-acetyl-alpha-D-muramoyl-L-alanyl-gamma-D-glutamyl-meso-2,6-diaminopimeloyl-D-alanyl-D-alanine + di-trans,octa-cis-undecaprenyl phosphate = di-trans,octa-cis-undecaprenyl diphospho-N-acetyl-alpha-D-muramoyl-L-alanyl-D-glutamyl-meso-2,6-diaminopimeloyl-D-alanyl-D-alanine + UMP</text>
        <dbReference type="Rhea" id="RHEA:28386"/>
        <dbReference type="ChEBI" id="CHEBI:57865"/>
        <dbReference type="ChEBI" id="CHEBI:60392"/>
        <dbReference type="ChEBI" id="CHEBI:61386"/>
        <dbReference type="ChEBI" id="CHEBI:61387"/>
        <dbReference type="EC" id="2.7.8.13"/>
    </reaction>
</comment>
<comment type="cofactor">
    <cofactor evidence="1">
        <name>Mg(2+)</name>
        <dbReference type="ChEBI" id="CHEBI:18420"/>
    </cofactor>
</comment>
<comment type="pathway">
    <text evidence="1">Cell wall biogenesis; peptidoglycan biosynthesis.</text>
</comment>
<comment type="subcellular location">
    <subcellularLocation>
        <location evidence="1">Cell inner membrane</location>
        <topology evidence="1">Multi-pass membrane protein</topology>
    </subcellularLocation>
</comment>
<comment type="similarity">
    <text evidence="1">Belongs to the glycosyltransferase 4 family. MraY subfamily.</text>
</comment>
<protein>
    <recommendedName>
        <fullName evidence="1">Phospho-N-acetylmuramoyl-pentapeptide-transferase</fullName>
        <ecNumber evidence="1">2.7.8.13</ecNumber>
    </recommendedName>
    <alternativeName>
        <fullName evidence="1">UDP-MurNAc-pentapeptide phosphotransferase</fullName>
    </alternativeName>
</protein>